<gene>
    <name evidence="1" type="primary">psiE</name>
    <name type="ordered locus">BCE_5221</name>
</gene>
<feature type="chain" id="PRO_0000160279" description="Protein PsiE homolog">
    <location>
        <begin position="1"/>
        <end position="133"/>
    </location>
</feature>
<feature type="transmembrane region" description="Helical" evidence="1">
    <location>
        <begin position="13"/>
        <end position="33"/>
    </location>
</feature>
<feature type="transmembrane region" description="Helical" evidence="1">
    <location>
        <begin position="55"/>
        <end position="75"/>
    </location>
</feature>
<feature type="transmembrane region" description="Helical" evidence="1">
    <location>
        <begin position="81"/>
        <end position="101"/>
    </location>
</feature>
<feature type="transmembrane region" description="Helical" evidence="1">
    <location>
        <begin position="105"/>
        <end position="125"/>
    </location>
</feature>
<sequence length="133" mass="15806">MKFNIDHYIASVLQWILNIALIILSIVLSIFLINETITFIQYIFSTKEYTSYKLVESIIVYFLYFEFIALIIKYFKSNYHFPLRYFIYIGITALIRLIIVSHEEPMETLLYAGAILILVIALYISNMRDLRKE</sequence>
<keyword id="KW-1003">Cell membrane</keyword>
<keyword id="KW-0472">Membrane</keyword>
<keyword id="KW-0812">Transmembrane</keyword>
<keyword id="KW-1133">Transmembrane helix</keyword>
<organism>
    <name type="scientific">Bacillus cereus (strain ATCC 10987 / NRS 248)</name>
    <dbReference type="NCBI Taxonomy" id="222523"/>
    <lineage>
        <taxon>Bacteria</taxon>
        <taxon>Bacillati</taxon>
        <taxon>Bacillota</taxon>
        <taxon>Bacilli</taxon>
        <taxon>Bacillales</taxon>
        <taxon>Bacillaceae</taxon>
        <taxon>Bacillus</taxon>
        <taxon>Bacillus cereus group</taxon>
    </lineage>
</organism>
<reference key="1">
    <citation type="journal article" date="2004" name="Nucleic Acids Res.">
        <title>The genome sequence of Bacillus cereus ATCC 10987 reveals metabolic adaptations and a large plasmid related to Bacillus anthracis pXO1.</title>
        <authorList>
            <person name="Rasko D.A."/>
            <person name="Ravel J."/>
            <person name="Oekstad O.A."/>
            <person name="Helgason E."/>
            <person name="Cer R.Z."/>
            <person name="Jiang L."/>
            <person name="Shores K.A."/>
            <person name="Fouts D.E."/>
            <person name="Tourasse N.J."/>
            <person name="Angiuoli S.V."/>
            <person name="Kolonay J.F."/>
            <person name="Nelson W.C."/>
            <person name="Kolstoe A.-B."/>
            <person name="Fraser C.M."/>
            <person name="Read T.D."/>
        </authorList>
    </citation>
    <scope>NUCLEOTIDE SEQUENCE [LARGE SCALE GENOMIC DNA]</scope>
    <source>
        <strain>ATCC 10987 / NRS 248</strain>
    </source>
</reference>
<evidence type="ECO:0000255" key="1">
    <source>
        <dbReference type="HAMAP-Rule" id="MF_01048"/>
    </source>
</evidence>
<dbReference type="EMBL" id="AE017194">
    <property type="protein sequence ID" value="AAS44122.1"/>
    <property type="molecule type" value="Genomic_DNA"/>
</dbReference>
<dbReference type="SMR" id="Q72Y02"/>
<dbReference type="KEGG" id="bca:BCE_5221"/>
<dbReference type="HOGENOM" id="CLU_127561_0_0_9"/>
<dbReference type="Proteomes" id="UP000002527">
    <property type="component" value="Chromosome"/>
</dbReference>
<dbReference type="GO" id="GO:0005886">
    <property type="term" value="C:plasma membrane"/>
    <property type="evidence" value="ECO:0007669"/>
    <property type="project" value="UniProtKB-SubCell"/>
</dbReference>
<dbReference type="GO" id="GO:0016036">
    <property type="term" value="P:cellular response to phosphate starvation"/>
    <property type="evidence" value="ECO:0007669"/>
    <property type="project" value="InterPro"/>
</dbReference>
<dbReference type="HAMAP" id="MF_01048">
    <property type="entry name" value="PsiE"/>
    <property type="match status" value="1"/>
</dbReference>
<dbReference type="InterPro" id="IPR009315">
    <property type="entry name" value="P_starv_induced_PsiE"/>
</dbReference>
<dbReference type="InterPro" id="IPR020948">
    <property type="entry name" value="P_starv_induced_PsiE-like"/>
</dbReference>
<dbReference type="NCBIfam" id="NF002765">
    <property type="entry name" value="PRK02833.1-3"/>
    <property type="match status" value="1"/>
</dbReference>
<dbReference type="PANTHER" id="PTHR37819">
    <property type="entry name" value="PROTEIN PSIE"/>
    <property type="match status" value="1"/>
</dbReference>
<dbReference type="PANTHER" id="PTHR37819:SF1">
    <property type="entry name" value="PROTEIN PSIE"/>
    <property type="match status" value="1"/>
</dbReference>
<dbReference type="Pfam" id="PF06146">
    <property type="entry name" value="PsiE"/>
    <property type="match status" value="1"/>
</dbReference>
<dbReference type="PIRSF" id="PIRSF029598">
    <property type="entry name" value="PsiE"/>
    <property type="match status" value="1"/>
</dbReference>
<proteinExistence type="inferred from homology"/>
<comment type="subcellular location">
    <subcellularLocation>
        <location evidence="1">Cell membrane</location>
        <topology evidence="1">Multi-pass membrane protein</topology>
    </subcellularLocation>
</comment>
<comment type="similarity">
    <text evidence="1">Belongs to the PsiE family.</text>
</comment>
<name>PSIE_BACC1</name>
<protein>
    <recommendedName>
        <fullName evidence="1">Protein PsiE homolog</fullName>
    </recommendedName>
</protein>
<accession>Q72Y02</accession>